<reference key="1">
    <citation type="submission" date="2007-10" db="EMBL/GenBank/DDBJ databases">
        <title>Complete sequence of Shewanella pealeana ATCC 700345.</title>
        <authorList>
            <consortium name="US DOE Joint Genome Institute"/>
            <person name="Copeland A."/>
            <person name="Lucas S."/>
            <person name="Lapidus A."/>
            <person name="Barry K."/>
            <person name="Glavina del Rio T."/>
            <person name="Dalin E."/>
            <person name="Tice H."/>
            <person name="Pitluck S."/>
            <person name="Chertkov O."/>
            <person name="Brettin T."/>
            <person name="Bruce D."/>
            <person name="Detter J.C."/>
            <person name="Han C."/>
            <person name="Schmutz J."/>
            <person name="Larimer F."/>
            <person name="Land M."/>
            <person name="Hauser L."/>
            <person name="Kyrpides N."/>
            <person name="Kim E."/>
            <person name="Zhao J.-S.Z."/>
            <person name="Manno D."/>
            <person name="Hawari J."/>
            <person name="Richardson P."/>
        </authorList>
    </citation>
    <scope>NUCLEOTIDE SEQUENCE [LARGE SCALE GENOMIC DNA]</scope>
    <source>
        <strain>ATCC 700345 / ANG-SQ1</strain>
    </source>
</reference>
<proteinExistence type="inferred from homology"/>
<feature type="chain" id="PRO_1000086307" description="Large ribosomal subunit protein uL1">
    <location>
        <begin position="1"/>
        <end position="233"/>
    </location>
</feature>
<gene>
    <name evidence="1" type="primary">rplA</name>
    <name type="ordered locus">Spea_0174</name>
</gene>
<dbReference type="EMBL" id="CP000851">
    <property type="protein sequence ID" value="ABV85503.1"/>
    <property type="molecule type" value="Genomic_DNA"/>
</dbReference>
<dbReference type="RefSeq" id="WP_012153449.1">
    <property type="nucleotide sequence ID" value="NC_009901.1"/>
</dbReference>
<dbReference type="SMR" id="A8GYW6"/>
<dbReference type="STRING" id="398579.Spea_0174"/>
<dbReference type="KEGG" id="spl:Spea_0174"/>
<dbReference type="eggNOG" id="COG0081">
    <property type="taxonomic scope" value="Bacteria"/>
</dbReference>
<dbReference type="HOGENOM" id="CLU_062853_0_0_6"/>
<dbReference type="OrthoDB" id="9803740at2"/>
<dbReference type="Proteomes" id="UP000002608">
    <property type="component" value="Chromosome"/>
</dbReference>
<dbReference type="GO" id="GO:0022625">
    <property type="term" value="C:cytosolic large ribosomal subunit"/>
    <property type="evidence" value="ECO:0007669"/>
    <property type="project" value="TreeGrafter"/>
</dbReference>
<dbReference type="GO" id="GO:0019843">
    <property type="term" value="F:rRNA binding"/>
    <property type="evidence" value="ECO:0007669"/>
    <property type="project" value="UniProtKB-UniRule"/>
</dbReference>
<dbReference type="GO" id="GO:0003735">
    <property type="term" value="F:structural constituent of ribosome"/>
    <property type="evidence" value="ECO:0007669"/>
    <property type="project" value="InterPro"/>
</dbReference>
<dbReference type="GO" id="GO:0000049">
    <property type="term" value="F:tRNA binding"/>
    <property type="evidence" value="ECO:0007669"/>
    <property type="project" value="UniProtKB-KW"/>
</dbReference>
<dbReference type="GO" id="GO:0006417">
    <property type="term" value="P:regulation of translation"/>
    <property type="evidence" value="ECO:0007669"/>
    <property type="project" value="UniProtKB-KW"/>
</dbReference>
<dbReference type="GO" id="GO:0006412">
    <property type="term" value="P:translation"/>
    <property type="evidence" value="ECO:0007669"/>
    <property type="project" value="UniProtKB-UniRule"/>
</dbReference>
<dbReference type="CDD" id="cd00403">
    <property type="entry name" value="Ribosomal_L1"/>
    <property type="match status" value="1"/>
</dbReference>
<dbReference type="FunFam" id="3.40.50.790:FF:000001">
    <property type="entry name" value="50S ribosomal protein L1"/>
    <property type="match status" value="1"/>
</dbReference>
<dbReference type="Gene3D" id="3.30.190.20">
    <property type="match status" value="1"/>
</dbReference>
<dbReference type="Gene3D" id="3.40.50.790">
    <property type="match status" value="1"/>
</dbReference>
<dbReference type="HAMAP" id="MF_01318_B">
    <property type="entry name" value="Ribosomal_uL1_B"/>
    <property type="match status" value="1"/>
</dbReference>
<dbReference type="InterPro" id="IPR005878">
    <property type="entry name" value="Ribosom_uL1_bac-type"/>
</dbReference>
<dbReference type="InterPro" id="IPR002143">
    <property type="entry name" value="Ribosomal_uL1"/>
</dbReference>
<dbReference type="InterPro" id="IPR023674">
    <property type="entry name" value="Ribosomal_uL1-like"/>
</dbReference>
<dbReference type="InterPro" id="IPR028364">
    <property type="entry name" value="Ribosomal_uL1/biogenesis"/>
</dbReference>
<dbReference type="InterPro" id="IPR016095">
    <property type="entry name" value="Ribosomal_uL1_3-a/b-sand"/>
</dbReference>
<dbReference type="InterPro" id="IPR023673">
    <property type="entry name" value="Ribosomal_uL1_CS"/>
</dbReference>
<dbReference type="NCBIfam" id="TIGR01169">
    <property type="entry name" value="rplA_bact"/>
    <property type="match status" value="1"/>
</dbReference>
<dbReference type="PANTHER" id="PTHR36427">
    <property type="entry name" value="54S RIBOSOMAL PROTEIN L1, MITOCHONDRIAL"/>
    <property type="match status" value="1"/>
</dbReference>
<dbReference type="PANTHER" id="PTHR36427:SF3">
    <property type="entry name" value="LARGE RIBOSOMAL SUBUNIT PROTEIN UL1M"/>
    <property type="match status" value="1"/>
</dbReference>
<dbReference type="Pfam" id="PF00687">
    <property type="entry name" value="Ribosomal_L1"/>
    <property type="match status" value="1"/>
</dbReference>
<dbReference type="PIRSF" id="PIRSF002155">
    <property type="entry name" value="Ribosomal_L1"/>
    <property type="match status" value="1"/>
</dbReference>
<dbReference type="SUPFAM" id="SSF56808">
    <property type="entry name" value="Ribosomal protein L1"/>
    <property type="match status" value="1"/>
</dbReference>
<dbReference type="PROSITE" id="PS01199">
    <property type="entry name" value="RIBOSOMAL_L1"/>
    <property type="match status" value="1"/>
</dbReference>
<keyword id="KW-1185">Reference proteome</keyword>
<keyword id="KW-0678">Repressor</keyword>
<keyword id="KW-0687">Ribonucleoprotein</keyword>
<keyword id="KW-0689">Ribosomal protein</keyword>
<keyword id="KW-0694">RNA-binding</keyword>
<keyword id="KW-0699">rRNA-binding</keyword>
<keyword id="KW-0810">Translation regulation</keyword>
<keyword id="KW-0820">tRNA-binding</keyword>
<protein>
    <recommendedName>
        <fullName evidence="1">Large ribosomal subunit protein uL1</fullName>
    </recommendedName>
    <alternativeName>
        <fullName evidence="2">50S ribosomal protein L1</fullName>
    </alternativeName>
</protein>
<name>RL1_SHEPA</name>
<accession>A8GYW6</accession>
<comment type="function">
    <text evidence="1">Binds directly to 23S rRNA. The L1 stalk is quite mobile in the ribosome, and is involved in E site tRNA release.</text>
</comment>
<comment type="function">
    <text evidence="1">Protein L1 is also a translational repressor protein, it controls the translation of the L11 operon by binding to its mRNA.</text>
</comment>
<comment type="subunit">
    <text evidence="1">Part of the 50S ribosomal subunit.</text>
</comment>
<comment type="similarity">
    <text evidence="1">Belongs to the universal ribosomal protein uL1 family.</text>
</comment>
<organism>
    <name type="scientific">Shewanella pealeana (strain ATCC 700345 / ANG-SQ1)</name>
    <dbReference type="NCBI Taxonomy" id="398579"/>
    <lineage>
        <taxon>Bacteria</taxon>
        <taxon>Pseudomonadati</taxon>
        <taxon>Pseudomonadota</taxon>
        <taxon>Gammaproteobacteria</taxon>
        <taxon>Alteromonadales</taxon>
        <taxon>Shewanellaceae</taxon>
        <taxon>Shewanella</taxon>
    </lineage>
</organism>
<evidence type="ECO:0000255" key="1">
    <source>
        <dbReference type="HAMAP-Rule" id="MF_01318"/>
    </source>
</evidence>
<evidence type="ECO:0000305" key="2"/>
<sequence length="233" mass="24524">MAKLTKRARLIREKVEATKSYDINEAVALLKELATAKFLESVDVAVNLGVDPRKSDQNVRGATVLPHGTGRDVRVAVFTQGANAEAAKEAGAELVGMDELAAQIKAGEMNFDVVIASPDAMRVVGMLGQILGPRGLMPNPKTGTVTPNVAEAVKNAKAGQVRYRNDKNGIIHTTIGKVDFEPAQLKENLEALLGALKKAKPAAAKGVFIKKVSISTTMGAGVAVDQGTLDDAK</sequence>